<sequence>MVLESTMVCVDNSEYMRNGDFLPTRLQAQQDAVNIVCHSKTRSNPENNVGLITLANDCEVLTTLTPDTGRILSKLHTVQPKGKITFCTGIRVAHLALKHRQGKNHKMRIIAFVGSPVEDNEKDLVKLAKRLKKEKVNVDIINFGEEEVNTEKLTAFVNTLNGKDGTGSHLVTVPPGPSLADALISSPILAGEGGAMLGLGASDFEFGVDPSADPELALALRVSMEEQRQRQEEEARRAAAASAAEAGIATTGTEDSDDALLKMTISQQEFGRTGLPDLSSMTEEEQIAYAMQMSLQGAEFGQAESADIDASSAMDTSEPAKEEDDYDVMQDPEFLQSVLENLPGVDPNNEAIRNAMGSLASQATKDGKKDKKEEDKK</sequence>
<evidence type="ECO:0000250" key="1">
    <source>
        <dbReference type="UniProtKB" id="O35226"/>
    </source>
</evidence>
<evidence type="ECO:0000255" key="2">
    <source>
        <dbReference type="PROSITE-ProRule" id="PRU00213"/>
    </source>
</evidence>
<evidence type="ECO:0000255" key="3">
    <source>
        <dbReference type="PROSITE-ProRule" id="PRU00219"/>
    </source>
</evidence>
<evidence type="ECO:0000256" key="4">
    <source>
        <dbReference type="SAM" id="MobiDB-lite"/>
    </source>
</evidence>
<evidence type="ECO:0000269" key="5">
    <source>
    </source>
</evidence>
<evidence type="ECO:0000269" key="6">
    <source>
    </source>
</evidence>
<evidence type="ECO:0000269" key="7">
    <source>
    </source>
</evidence>
<evidence type="ECO:0000269" key="8">
    <source>
    </source>
</evidence>
<evidence type="ECO:0000269" key="9">
    <source>
    </source>
</evidence>
<evidence type="ECO:0000269" key="10">
    <source>
    </source>
</evidence>
<evidence type="ECO:0000269" key="11">
    <source>
    </source>
</evidence>
<evidence type="ECO:0000269" key="12">
    <source>
    </source>
</evidence>
<evidence type="ECO:0000269" key="13">
    <source>
    </source>
</evidence>
<evidence type="ECO:0000269" key="14">
    <source>
    </source>
</evidence>
<evidence type="ECO:0000269" key="15">
    <source>
    </source>
</evidence>
<evidence type="ECO:0000269" key="16">
    <source>
    </source>
</evidence>
<evidence type="ECO:0000269" key="17">
    <source>
    </source>
</evidence>
<evidence type="ECO:0000305" key="18"/>
<evidence type="ECO:0007744" key="19">
    <source>
    </source>
</evidence>
<evidence type="ECO:0007744" key="20">
    <source>
    </source>
</evidence>
<evidence type="ECO:0007744" key="21">
    <source>
    </source>
</evidence>
<evidence type="ECO:0007744" key="22">
    <source>
    </source>
</evidence>
<evidence type="ECO:0007744" key="23">
    <source>
    </source>
</evidence>
<evidence type="ECO:0007744" key="24">
    <source>
    </source>
</evidence>
<evidence type="ECO:0007744" key="25">
    <source>
    </source>
</evidence>
<evidence type="ECO:0007829" key="26">
    <source>
        <dbReference type="PDB" id="1P9C"/>
    </source>
</evidence>
<evidence type="ECO:0007829" key="27">
    <source>
        <dbReference type="PDB" id="1YX4"/>
    </source>
</evidence>
<evidence type="ECO:0007829" key="28">
    <source>
        <dbReference type="PDB" id="2KDE"/>
    </source>
</evidence>
<evidence type="ECO:0007829" key="29">
    <source>
        <dbReference type="PDB" id="6MUN"/>
    </source>
</evidence>
<evidence type="ECO:0007829" key="30">
    <source>
        <dbReference type="PDB" id="6U19"/>
    </source>
</evidence>
<evidence type="ECO:0007829" key="31">
    <source>
        <dbReference type="PDB" id="9E8J"/>
    </source>
</evidence>
<keyword id="KW-0002">3D-structure</keyword>
<keyword id="KW-0025">Alternative splicing</keyword>
<keyword id="KW-0903">Direct protein sequencing</keyword>
<keyword id="KW-1017">Isopeptide bond</keyword>
<keyword id="KW-0597">Phosphoprotein</keyword>
<keyword id="KW-0647">Proteasome</keyword>
<keyword id="KW-1267">Proteomics identification</keyword>
<keyword id="KW-1185">Reference proteome</keyword>
<keyword id="KW-0677">Repeat</keyword>
<keyword id="KW-0832">Ubl conjugation</keyword>
<name>PSMD4_HUMAN</name>
<gene>
    <name type="primary">PSMD4</name>
    <name type="synonym">MCB1</name>
</gene>
<dbReference type="EMBL" id="U51007">
    <property type="protein sequence ID" value="AAC50433.1"/>
    <property type="molecule type" value="mRNA"/>
</dbReference>
<dbReference type="EMBL" id="U24704">
    <property type="protein sequence ID" value="AAB54057.1"/>
    <property type="molecule type" value="mRNA"/>
</dbReference>
<dbReference type="EMBL" id="AB033605">
    <property type="protein sequence ID" value="BAA97581.1"/>
    <property type="molecule type" value="mRNA"/>
</dbReference>
<dbReference type="EMBL" id="AL391069">
    <property type="status" value="NOT_ANNOTATED_CDS"/>
    <property type="molecule type" value="Genomic_DNA"/>
</dbReference>
<dbReference type="EMBL" id="AL592424">
    <property type="status" value="NOT_ANNOTATED_CDS"/>
    <property type="molecule type" value="Genomic_DNA"/>
</dbReference>
<dbReference type="EMBL" id="CH471121">
    <property type="protein sequence ID" value="EAW53457.1"/>
    <property type="molecule type" value="Genomic_DNA"/>
</dbReference>
<dbReference type="EMBL" id="CH471121">
    <property type="protein sequence ID" value="EAW53458.1"/>
    <property type="molecule type" value="Genomic_DNA"/>
</dbReference>
<dbReference type="EMBL" id="BC002365">
    <property type="protein sequence ID" value="AAH02365.1"/>
    <property type="molecule type" value="mRNA"/>
</dbReference>
<dbReference type="EMBL" id="BC072008">
    <property type="protein sequence ID" value="AAH72008.1"/>
    <property type="molecule type" value="mRNA"/>
</dbReference>
<dbReference type="EMBL" id="U72664">
    <property type="protein sequence ID" value="AAB68598.1"/>
    <property type="molecule type" value="mRNA"/>
</dbReference>
<dbReference type="CCDS" id="CCDS991.1">
    <molecule id="P55036-1"/>
</dbReference>
<dbReference type="PIR" id="S63671">
    <property type="entry name" value="S63671"/>
</dbReference>
<dbReference type="RefSeq" id="NP_002801.1">
    <molecule id="P55036-1"/>
    <property type="nucleotide sequence ID" value="NM_002810.4"/>
</dbReference>
<dbReference type="PDB" id="1P9C">
    <property type="method" value="NMR"/>
    <property type="chains" value="A=263-307"/>
</dbReference>
<dbReference type="PDB" id="1P9D">
    <property type="method" value="NMR"/>
    <property type="chains" value="S=263-307"/>
</dbReference>
<dbReference type="PDB" id="1UEL">
    <property type="method" value="NMR"/>
    <property type="chains" value="B=263-307"/>
</dbReference>
<dbReference type="PDB" id="1YX4">
    <property type="method" value="NMR"/>
    <property type="chains" value="A=196-306"/>
</dbReference>
<dbReference type="PDB" id="1YX5">
    <property type="method" value="NMR"/>
    <property type="chains" value="A=192-306"/>
</dbReference>
<dbReference type="PDB" id="1YX6">
    <property type="method" value="NMR"/>
    <property type="chains" value="A=196-306"/>
</dbReference>
<dbReference type="PDB" id="2KDE">
    <property type="method" value="NMR"/>
    <property type="chains" value="A=196-306"/>
</dbReference>
<dbReference type="PDB" id="2KDF">
    <property type="method" value="NMR"/>
    <property type="chains" value="A=196-306"/>
</dbReference>
<dbReference type="PDB" id="5GJQ">
    <property type="method" value="EM"/>
    <property type="resolution" value="4.50 A"/>
    <property type="chains" value="W=1-377"/>
</dbReference>
<dbReference type="PDB" id="5GJR">
    <property type="method" value="EM"/>
    <property type="resolution" value="3.50 A"/>
    <property type="chains" value="AA/W=1-377"/>
</dbReference>
<dbReference type="PDB" id="5L4K">
    <property type="method" value="EM"/>
    <property type="resolution" value="4.50 A"/>
    <property type="chains" value="W=1-377"/>
</dbReference>
<dbReference type="PDB" id="5LN3">
    <property type="method" value="EM"/>
    <property type="resolution" value="6.80 A"/>
    <property type="chains" value="W=1-377"/>
</dbReference>
<dbReference type="PDB" id="5M32">
    <property type="method" value="EM"/>
    <property type="resolution" value="3.80 A"/>
    <property type="chains" value="p=1-377"/>
</dbReference>
<dbReference type="PDB" id="5T0C">
    <property type="method" value="EM"/>
    <property type="resolution" value="3.80 A"/>
    <property type="chains" value="Ab/Bb=1-377"/>
</dbReference>
<dbReference type="PDB" id="5T0G">
    <property type="method" value="EM"/>
    <property type="resolution" value="4.40 A"/>
    <property type="chains" value="b=1-377"/>
</dbReference>
<dbReference type="PDB" id="5T0H">
    <property type="method" value="EM"/>
    <property type="resolution" value="6.80 A"/>
    <property type="chains" value="b=1-377"/>
</dbReference>
<dbReference type="PDB" id="5T0I">
    <property type="method" value="EM"/>
    <property type="resolution" value="8.00 A"/>
    <property type="chains" value="b=1-377"/>
</dbReference>
<dbReference type="PDB" id="5T0J">
    <property type="method" value="EM"/>
    <property type="resolution" value="8.00 A"/>
    <property type="chains" value="b=1-377"/>
</dbReference>
<dbReference type="PDB" id="5VFP">
    <property type="method" value="EM"/>
    <property type="resolution" value="4.20 A"/>
    <property type="chains" value="b=1-191"/>
</dbReference>
<dbReference type="PDB" id="5VFQ">
    <property type="method" value="EM"/>
    <property type="resolution" value="4.20 A"/>
    <property type="chains" value="b=1-191"/>
</dbReference>
<dbReference type="PDB" id="5VFR">
    <property type="method" value="EM"/>
    <property type="resolution" value="4.90 A"/>
    <property type="chains" value="b=1-191"/>
</dbReference>
<dbReference type="PDB" id="5VFS">
    <property type="method" value="EM"/>
    <property type="resolution" value="3.60 A"/>
    <property type="chains" value="b=1-191"/>
</dbReference>
<dbReference type="PDB" id="5VFT">
    <property type="method" value="EM"/>
    <property type="resolution" value="7.00 A"/>
    <property type="chains" value="b=1-191"/>
</dbReference>
<dbReference type="PDB" id="5VFU">
    <property type="method" value="EM"/>
    <property type="resolution" value="5.80 A"/>
    <property type="chains" value="b=1-191"/>
</dbReference>
<dbReference type="PDB" id="5VGZ">
    <property type="method" value="EM"/>
    <property type="resolution" value="3.70 A"/>
    <property type="chains" value="b=1-191"/>
</dbReference>
<dbReference type="PDB" id="5VHF">
    <property type="method" value="EM"/>
    <property type="resolution" value="5.70 A"/>
    <property type="chains" value="b=1-191"/>
</dbReference>
<dbReference type="PDB" id="5VHH">
    <property type="method" value="EM"/>
    <property type="resolution" value="6.10 A"/>
    <property type="chains" value="b=1-191"/>
</dbReference>
<dbReference type="PDB" id="5VHI">
    <property type="method" value="EM"/>
    <property type="resolution" value="6.80 A"/>
    <property type="chains" value="b=1-191"/>
</dbReference>
<dbReference type="PDB" id="5VHS">
    <property type="method" value="EM"/>
    <property type="resolution" value="8.80 A"/>
    <property type="chains" value="b=1-191"/>
</dbReference>
<dbReference type="PDB" id="6MSB">
    <property type="method" value="EM"/>
    <property type="resolution" value="3.00 A"/>
    <property type="chains" value="b=1-377"/>
</dbReference>
<dbReference type="PDB" id="6MSD">
    <property type="method" value="EM"/>
    <property type="resolution" value="3.20 A"/>
    <property type="chains" value="b=1-377"/>
</dbReference>
<dbReference type="PDB" id="6MSE">
    <property type="method" value="EM"/>
    <property type="resolution" value="3.30 A"/>
    <property type="chains" value="H/h=286-362"/>
</dbReference>
<dbReference type="PDB" id="6MSG">
    <property type="method" value="EM"/>
    <property type="resolution" value="3.50 A"/>
    <property type="chains" value="b=1-377"/>
</dbReference>
<dbReference type="PDB" id="6MSH">
    <property type="method" value="EM"/>
    <property type="resolution" value="3.60 A"/>
    <property type="chains" value="b=1-377"/>
</dbReference>
<dbReference type="PDB" id="6MSJ">
    <property type="method" value="EM"/>
    <property type="resolution" value="3.30 A"/>
    <property type="chains" value="b=1-377"/>
</dbReference>
<dbReference type="PDB" id="6MSK">
    <property type="method" value="EM"/>
    <property type="resolution" value="3.20 A"/>
    <property type="chains" value="b=1-377"/>
</dbReference>
<dbReference type="PDB" id="6MUN">
    <property type="method" value="NMR"/>
    <property type="chains" value="A=196-306"/>
</dbReference>
<dbReference type="PDB" id="6U19">
    <property type="method" value="NMR"/>
    <property type="chains" value="A=305-377"/>
</dbReference>
<dbReference type="PDB" id="6WJD">
    <property type="method" value="EM"/>
    <property type="resolution" value="4.80 A"/>
    <property type="chains" value="b=1-377"/>
</dbReference>
<dbReference type="PDB" id="6WJN">
    <property type="method" value="EM"/>
    <property type="resolution" value="5.70 A"/>
    <property type="chains" value="b=1-191"/>
</dbReference>
<dbReference type="PDB" id="7QXN">
    <property type="method" value="EM"/>
    <property type="resolution" value="3.70 A"/>
    <property type="chains" value="b=1-377"/>
</dbReference>
<dbReference type="PDB" id="7QXP">
    <property type="method" value="EM"/>
    <property type="resolution" value="3.60 A"/>
    <property type="chains" value="b=1-377"/>
</dbReference>
<dbReference type="PDB" id="7QXU">
    <property type="method" value="EM"/>
    <property type="resolution" value="4.30 A"/>
    <property type="chains" value="b=1-377"/>
</dbReference>
<dbReference type="PDB" id="7QXW">
    <property type="method" value="EM"/>
    <property type="resolution" value="4.10 A"/>
    <property type="chains" value="b=1-377"/>
</dbReference>
<dbReference type="PDB" id="7QXX">
    <property type="method" value="EM"/>
    <property type="resolution" value="4.40 A"/>
    <property type="chains" value="b=1-377"/>
</dbReference>
<dbReference type="PDB" id="7QY7">
    <property type="method" value="EM"/>
    <property type="resolution" value="4.70 A"/>
    <property type="chains" value="b=1-377"/>
</dbReference>
<dbReference type="PDB" id="7QYA">
    <property type="method" value="EM"/>
    <property type="resolution" value="4.80 A"/>
    <property type="chains" value="b=1-377"/>
</dbReference>
<dbReference type="PDB" id="7QYB">
    <property type="method" value="EM"/>
    <property type="resolution" value="4.10 A"/>
    <property type="chains" value="b=1-377"/>
</dbReference>
<dbReference type="PDB" id="7W37">
    <property type="method" value="EM"/>
    <property type="resolution" value="3.00 A"/>
    <property type="chains" value="b=1-377"/>
</dbReference>
<dbReference type="PDB" id="7W38">
    <property type="method" value="EM"/>
    <property type="resolution" value="3.10 A"/>
    <property type="chains" value="b=1-377"/>
</dbReference>
<dbReference type="PDB" id="7W39">
    <property type="method" value="EM"/>
    <property type="resolution" value="3.20 A"/>
    <property type="chains" value="b=1-377"/>
</dbReference>
<dbReference type="PDB" id="7W3A">
    <property type="method" value="EM"/>
    <property type="resolution" value="3.50 A"/>
    <property type="chains" value="b=1-377"/>
</dbReference>
<dbReference type="PDB" id="7W3B">
    <property type="method" value="EM"/>
    <property type="resolution" value="3.60 A"/>
    <property type="chains" value="b=1-377"/>
</dbReference>
<dbReference type="PDB" id="7W3C">
    <property type="method" value="EM"/>
    <property type="resolution" value="3.40 A"/>
    <property type="chains" value="b=1-377"/>
</dbReference>
<dbReference type="PDB" id="7W3F">
    <property type="method" value="EM"/>
    <property type="resolution" value="3.30 A"/>
    <property type="chains" value="b=1-377"/>
</dbReference>
<dbReference type="PDB" id="7W3G">
    <property type="method" value="EM"/>
    <property type="resolution" value="3.20 A"/>
    <property type="chains" value="b=1-377"/>
</dbReference>
<dbReference type="PDB" id="7W3H">
    <property type="method" value="EM"/>
    <property type="resolution" value="3.20 A"/>
    <property type="chains" value="b=1-377"/>
</dbReference>
<dbReference type="PDB" id="7W3I">
    <property type="method" value="EM"/>
    <property type="resolution" value="3.50 A"/>
    <property type="chains" value="b=1-377"/>
</dbReference>
<dbReference type="PDB" id="7W3J">
    <property type="method" value="EM"/>
    <property type="resolution" value="3.50 A"/>
    <property type="chains" value="b=1-377"/>
</dbReference>
<dbReference type="PDB" id="7W3K">
    <property type="method" value="EM"/>
    <property type="resolution" value="3.60 A"/>
    <property type="chains" value="b=1-377"/>
</dbReference>
<dbReference type="PDB" id="7W3M">
    <property type="method" value="EM"/>
    <property type="resolution" value="3.50 A"/>
    <property type="chains" value="b=1-377"/>
</dbReference>
<dbReference type="PDB" id="8CVT">
    <property type="method" value="EM"/>
    <property type="resolution" value="3.00 A"/>
    <property type="chains" value="b=1-377"/>
</dbReference>
<dbReference type="PDB" id="8JRI">
    <property type="method" value="EM"/>
    <property type="resolution" value="3.40 A"/>
    <property type="chains" value="b=1-377"/>
</dbReference>
<dbReference type="PDB" id="8JRT">
    <property type="method" value="EM"/>
    <property type="resolution" value="3.60 A"/>
    <property type="chains" value="b=1-377"/>
</dbReference>
<dbReference type="PDB" id="8JTI">
    <property type="method" value="EM"/>
    <property type="resolution" value="3.80 A"/>
    <property type="chains" value="b=1-377"/>
</dbReference>
<dbReference type="PDB" id="8K0G">
    <property type="method" value="EM"/>
    <property type="resolution" value="3.80 A"/>
    <property type="chains" value="b=1-377"/>
</dbReference>
<dbReference type="PDB" id="8USB">
    <property type="method" value="EM"/>
    <property type="resolution" value="2.73 A"/>
    <property type="chains" value="b=1-377"/>
</dbReference>
<dbReference type="PDB" id="8USC">
    <property type="method" value="EM"/>
    <property type="resolution" value="3.10 A"/>
    <property type="chains" value="b=1-377"/>
</dbReference>
<dbReference type="PDB" id="9E8G">
    <property type="method" value="EM"/>
    <property type="resolution" value="3.01 A"/>
    <property type="chains" value="b=1-377"/>
</dbReference>
<dbReference type="PDB" id="9E8H">
    <property type="method" value="EM"/>
    <property type="resolution" value="2.90 A"/>
    <property type="chains" value="b=1-377"/>
</dbReference>
<dbReference type="PDB" id="9E8I">
    <property type="method" value="EM"/>
    <property type="resolution" value="2.87 A"/>
    <property type="chains" value="b=1-377"/>
</dbReference>
<dbReference type="PDB" id="9E8J">
    <property type="method" value="EM"/>
    <property type="resolution" value="3.47 A"/>
    <property type="chains" value="b=1-377"/>
</dbReference>
<dbReference type="PDB" id="9E8K">
    <property type="method" value="EM"/>
    <property type="resolution" value="4.08 A"/>
    <property type="chains" value="b=1-377"/>
</dbReference>
<dbReference type="PDB" id="9E8L">
    <property type="method" value="EM"/>
    <property type="resolution" value="3.59 A"/>
    <property type="chains" value="b=1-377"/>
</dbReference>
<dbReference type="PDB" id="9E8N">
    <property type="method" value="EM"/>
    <property type="resolution" value="3.62 A"/>
    <property type="chains" value="b=1-377"/>
</dbReference>
<dbReference type="PDB" id="9E8O">
    <property type="method" value="EM"/>
    <property type="resolution" value="3.10 A"/>
    <property type="chains" value="b=1-377"/>
</dbReference>
<dbReference type="PDB" id="9E8Q">
    <property type="method" value="EM"/>
    <property type="resolution" value="3.16 A"/>
    <property type="chains" value="b=1-377"/>
</dbReference>
<dbReference type="PDBsum" id="1P9C"/>
<dbReference type="PDBsum" id="1P9D"/>
<dbReference type="PDBsum" id="1UEL"/>
<dbReference type="PDBsum" id="1YX4"/>
<dbReference type="PDBsum" id="1YX5"/>
<dbReference type="PDBsum" id="1YX6"/>
<dbReference type="PDBsum" id="2KDE"/>
<dbReference type="PDBsum" id="2KDF"/>
<dbReference type="PDBsum" id="5GJQ"/>
<dbReference type="PDBsum" id="5GJR"/>
<dbReference type="PDBsum" id="5L4K"/>
<dbReference type="PDBsum" id="5LN3"/>
<dbReference type="PDBsum" id="5M32"/>
<dbReference type="PDBsum" id="5T0C"/>
<dbReference type="PDBsum" id="5T0G"/>
<dbReference type="PDBsum" id="5T0H"/>
<dbReference type="PDBsum" id="5T0I"/>
<dbReference type="PDBsum" id="5T0J"/>
<dbReference type="PDBsum" id="5VFP"/>
<dbReference type="PDBsum" id="5VFQ"/>
<dbReference type="PDBsum" id="5VFR"/>
<dbReference type="PDBsum" id="5VFS"/>
<dbReference type="PDBsum" id="5VFT"/>
<dbReference type="PDBsum" id="5VFU"/>
<dbReference type="PDBsum" id="5VGZ"/>
<dbReference type="PDBsum" id="5VHF"/>
<dbReference type="PDBsum" id="5VHH"/>
<dbReference type="PDBsum" id="5VHI"/>
<dbReference type="PDBsum" id="5VHS"/>
<dbReference type="PDBsum" id="6MSB"/>
<dbReference type="PDBsum" id="6MSD"/>
<dbReference type="PDBsum" id="6MSE"/>
<dbReference type="PDBsum" id="6MSG"/>
<dbReference type="PDBsum" id="6MSH"/>
<dbReference type="PDBsum" id="6MSJ"/>
<dbReference type="PDBsum" id="6MSK"/>
<dbReference type="PDBsum" id="6MUN"/>
<dbReference type="PDBsum" id="6U19"/>
<dbReference type="PDBsum" id="6WJD"/>
<dbReference type="PDBsum" id="6WJN"/>
<dbReference type="PDBsum" id="7QXN"/>
<dbReference type="PDBsum" id="7QXP"/>
<dbReference type="PDBsum" id="7QXU"/>
<dbReference type="PDBsum" id="7QXW"/>
<dbReference type="PDBsum" id="7QXX"/>
<dbReference type="PDBsum" id="7QY7"/>
<dbReference type="PDBsum" id="7QYA"/>
<dbReference type="PDBsum" id="7QYB"/>
<dbReference type="PDBsum" id="7W37"/>
<dbReference type="PDBsum" id="7W38"/>
<dbReference type="PDBsum" id="7W39"/>
<dbReference type="PDBsum" id="7W3A"/>
<dbReference type="PDBsum" id="7W3B"/>
<dbReference type="PDBsum" id="7W3C"/>
<dbReference type="PDBsum" id="7W3F"/>
<dbReference type="PDBsum" id="7W3G"/>
<dbReference type="PDBsum" id="7W3H"/>
<dbReference type="PDBsum" id="7W3I"/>
<dbReference type="PDBsum" id="7W3J"/>
<dbReference type="PDBsum" id="7W3K"/>
<dbReference type="PDBsum" id="7W3M"/>
<dbReference type="PDBsum" id="8CVT"/>
<dbReference type="PDBsum" id="8JRI"/>
<dbReference type="PDBsum" id="8JRT"/>
<dbReference type="PDBsum" id="8JTI"/>
<dbReference type="PDBsum" id="8K0G"/>
<dbReference type="PDBsum" id="8USB"/>
<dbReference type="PDBsum" id="8USC"/>
<dbReference type="PDBsum" id="9E8G"/>
<dbReference type="PDBsum" id="9E8H"/>
<dbReference type="PDBsum" id="9E8I"/>
<dbReference type="PDBsum" id="9E8J"/>
<dbReference type="PDBsum" id="9E8K"/>
<dbReference type="PDBsum" id="9E8L"/>
<dbReference type="PDBsum" id="9E8N"/>
<dbReference type="PDBsum" id="9E8O"/>
<dbReference type="PDBsum" id="9E8Q"/>
<dbReference type="BMRB" id="P55036"/>
<dbReference type="EMDB" id="EMD-14201"/>
<dbReference type="EMDB" id="EMD-14202"/>
<dbReference type="EMDB" id="EMD-14203"/>
<dbReference type="EMDB" id="EMD-14204"/>
<dbReference type="EMDB" id="EMD-14205"/>
<dbReference type="EMDB" id="EMD-14209"/>
<dbReference type="EMDB" id="EMD-14210"/>
<dbReference type="EMDB" id="EMD-14211"/>
<dbReference type="EMDB" id="EMD-21691"/>
<dbReference type="EMDB" id="EMD-21696"/>
<dbReference type="EMDB" id="EMD-27018"/>
<dbReference type="EMDB" id="EMD-32272"/>
<dbReference type="EMDB" id="EMD-32273"/>
<dbReference type="EMDB" id="EMD-32274"/>
<dbReference type="EMDB" id="EMD-32275"/>
<dbReference type="EMDB" id="EMD-32276"/>
<dbReference type="EMDB" id="EMD-32277"/>
<dbReference type="EMDB" id="EMD-32278"/>
<dbReference type="EMDB" id="EMD-32279"/>
<dbReference type="EMDB" id="EMD-32280"/>
<dbReference type="EMDB" id="EMD-32281"/>
<dbReference type="EMDB" id="EMD-32282"/>
<dbReference type="EMDB" id="EMD-32283"/>
<dbReference type="EMDB" id="EMD-32284"/>
<dbReference type="EMDB" id="EMD-36598"/>
<dbReference type="EMDB" id="EMD-36605"/>
<dbReference type="EMDB" id="EMD-36645"/>
<dbReference type="EMDB" id="EMD-36764"/>
<dbReference type="EMDB" id="EMD-4089"/>
<dbReference type="EMDB" id="EMD-42506"/>
<dbReference type="EMDB" id="EMD-42507"/>
<dbReference type="EMDB" id="EMD-47719"/>
<dbReference type="EMDB" id="EMD-47720"/>
<dbReference type="EMDB" id="EMD-47721"/>
<dbReference type="EMDB" id="EMD-47722"/>
<dbReference type="EMDB" id="EMD-47723"/>
<dbReference type="EMDB" id="EMD-47724"/>
<dbReference type="EMDB" id="EMD-47725"/>
<dbReference type="EMDB" id="EMD-47726"/>
<dbReference type="EMDB" id="EMD-47727"/>
<dbReference type="EMDB" id="EMD-60138"/>
<dbReference type="EMDB" id="EMD-60139"/>
<dbReference type="EMDB" id="EMD-8663"/>
<dbReference type="EMDB" id="EMD-8664"/>
<dbReference type="EMDB" id="EMD-8665"/>
<dbReference type="EMDB" id="EMD-8666"/>
<dbReference type="EMDB" id="EMD-8667"/>
<dbReference type="EMDB" id="EMD-8668"/>
<dbReference type="EMDB" id="EMD-8672"/>
<dbReference type="EMDB" id="EMD-8674"/>
<dbReference type="EMDB" id="EMD-8675"/>
<dbReference type="EMDB" id="EMD-8676"/>
<dbReference type="EMDB" id="EMD-8684"/>
<dbReference type="EMDB" id="EMD-9216"/>
<dbReference type="EMDB" id="EMD-9217"/>
<dbReference type="EMDB" id="EMD-9218"/>
<dbReference type="EMDB" id="EMD-9219"/>
<dbReference type="EMDB" id="EMD-9220"/>
<dbReference type="EMDB" id="EMD-9221"/>
<dbReference type="EMDB" id="EMD-9222"/>
<dbReference type="EMDB" id="EMD-9512"/>
<dbReference type="SMR" id="P55036"/>
<dbReference type="BioGRID" id="111683">
    <property type="interactions" value="394"/>
</dbReference>
<dbReference type="ComplexPortal" id="CPX-5993">
    <property type="entry name" value="26S proteasome complex"/>
</dbReference>
<dbReference type="ComplexPortal" id="CPX-8964">
    <property type="entry name" value="19S proteasome regulatory complex"/>
</dbReference>
<dbReference type="ComplexPortal" id="CPX-9082">
    <property type="entry name" value="19S-20S-PA28-alphabeta hybrid proteasome complex"/>
</dbReference>
<dbReference type="ComplexPortal" id="CPX-9085">
    <property type="entry name" value="19S-20S-PA28-gamma hybrid proteasome complex"/>
</dbReference>
<dbReference type="ComplexPortal" id="CPX-9086">
    <property type="entry name" value="30S proteasome complex"/>
</dbReference>
<dbReference type="CORUM" id="P55036"/>
<dbReference type="DIP" id="DIP-38189N"/>
<dbReference type="FunCoup" id="P55036">
    <property type="interactions" value="2803"/>
</dbReference>
<dbReference type="IntAct" id="P55036">
    <property type="interactions" value="161"/>
</dbReference>
<dbReference type="MINT" id="P55036"/>
<dbReference type="STRING" id="9606.ENSP00000357876"/>
<dbReference type="ChEMBL" id="CHEMBL2364701"/>
<dbReference type="GlyGen" id="P55036">
    <property type="glycosylation" value="1 site, 1 O-linked glycan (1 site)"/>
</dbReference>
<dbReference type="iPTMnet" id="P55036"/>
<dbReference type="MetOSite" id="P55036"/>
<dbReference type="PhosphoSitePlus" id="P55036"/>
<dbReference type="BioMuta" id="PSMD4"/>
<dbReference type="DMDM" id="1709796"/>
<dbReference type="jPOST" id="P55036"/>
<dbReference type="MassIVE" id="P55036"/>
<dbReference type="PaxDb" id="9606-ENSP00000357879"/>
<dbReference type="PeptideAtlas" id="P55036"/>
<dbReference type="ProteomicsDB" id="56762">
    <molecule id="P55036-1"/>
</dbReference>
<dbReference type="ProteomicsDB" id="56763">
    <molecule id="P55036-2"/>
</dbReference>
<dbReference type="Pumba" id="P55036"/>
<dbReference type="Antibodypedia" id="20322">
    <property type="antibodies" value="449 antibodies from 38 providers"/>
</dbReference>
<dbReference type="CPTC" id="P55036">
    <property type="antibodies" value="3 antibodies"/>
</dbReference>
<dbReference type="DNASU" id="5710"/>
<dbReference type="Ensembl" id="ENST00000368884.8">
    <molecule id="P55036-1"/>
    <property type="protein sequence ID" value="ENSP00000357879.4"/>
    <property type="gene ID" value="ENSG00000159352.16"/>
</dbReference>
<dbReference type="GeneID" id="5710"/>
<dbReference type="KEGG" id="hsa:5710"/>
<dbReference type="MANE-Select" id="ENST00000368884.8">
    <property type="protein sequence ID" value="ENSP00000357879.4"/>
    <property type="RefSeq nucleotide sequence ID" value="NM_002810.4"/>
    <property type="RefSeq protein sequence ID" value="NP_002801.1"/>
</dbReference>
<dbReference type="UCSC" id="uc001exl.4">
    <molecule id="P55036-1"/>
    <property type="organism name" value="human"/>
</dbReference>
<dbReference type="AGR" id="HGNC:9561"/>
<dbReference type="CTD" id="5710"/>
<dbReference type="DisGeNET" id="5710"/>
<dbReference type="GeneCards" id="PSMD4"/>
<dbReference type="HGNC" id="HGNC:9561">
    <property type="gene designation" value="PSMD4"/>
</dbReference>
<dbReference type="HPA" id="ENSG00000159352">
    <property type="expression patterns" value="Low tissue specificity"/>
</dbReference>
<dbReference type="MIM" id="601648">
    <property type="type" value="gene"/>
</dbReference>
<dbReference type="neXtProt" id="NX_P55036"/>
<dbReference type="OpenTargets" id="ENSG00000159352"/>
<dbReference type="PharmGKB" id="PA33907"/>
<dbReference type="VEuPathDB" id="HostDB:ENSG00000159352"/>
<dbReference type="eggNOG" id="KOG2884">
    <property type="taxonomic scope" value="Eukaryota"/>
</dbReference>
<dbReference type="GeneTree" id="ENSGT00530000064050"/>
<dbReference type="HOGENOM" id="CLU_033293_0_1_1"/>
<dbReference type="InParanoid" id="P55036"/>
<dbReference type="OMA" id="QMSMQDQ"/>
<dbReference type="OrthoDB" id="1731724at2759"/>
<dbReference type="PAN-GO" id="P55036">
    <property type="GO annotations" value="5 GO annotations based on evolutionary models"/>
</dbReference>
<dbReference type="PhylomeDB" id="P55036"/>
<dbReference type="TreeFam" id="TF106232"/>
<dbReference type="PathwayCommons" id="P55036"/>
<dbReference type="Reactome" id="R-HSA-9907900">
    <property type="pathway name" value="Proteasome assembly"/>
</dbReference>
<dbReference type="SignaLink" id="P55036"/>
<dbReference type="SIGNOR" id="P55036"/>
<dbReference type="BioGRID-ORCS" id="5710">
    <property type="hits" value="758 hits in 1176 CRISPR screens"/>
</dbReference>
<dbReference type="CD-CODE" id="8C2F96ED">
    <property type="entry name" value="Centrosome"/>
</dbReference>
<dbReference type="ChiTaRS" id="PSMD4">
    <property type="organism name" value="human"/>
</dbReference>
<dbReference type="EvolutionaryTrace" id="P55036"/>
<dbReference type="GeneWiki" id="PSMD4"/>
<dbReference type="GenomeRNAi" id="5710"/>
<dbReference type="Pharos" id="P55036">
    <property type="development level" value="Tbio"/>
</dbReference>
<dbReference type="PRO" id="PR:P55036"/>
<dbReference type="Proteomes" id="UP000005640">
    <property type="component" value="Chromosome 1"/>
</dbReference>
<dbReference type="RNAct" id="P55036">
    <property type="molecule type" value="protein"/>
</dbReference>
<dbReference type="Bgee" id="ENSG00000159352">
    <property type="expression patterns" value="Expressed in apex of heart and 208 other cell types or tissues"/>
</dbReference>
<dbReference type="ExpressionAtlas" id="P55036">
    <property type="expression patterns" value="baseline and differential"/>
</dbReference>
<dbReference type="GO" id="GO:0005829">
    <property type="term" value="C:cytosol"/>
    <property type="evidence" value="ECO:0000314"/>
    <property type="project" value="HPA"/>
</dbReference>
<dbReference type="GO" id="GO:0005654">
    <property type="term" value="C:nucleoplasm"/>
    <property type="evidence" value="ECO:0000314"/>
    <property type="project" value="HPA"/>
</dbReference>
<dbReference type="GO" id="GO:0005634">
    <property type="term" value="C:nucleus"/>
    <property type="evidence" value="ECO:0000318"/>
    <property type="project" value="GO_Central"/>
</dbReference>
<dbReference type="GO" id="GO:0022624">
    <property type="term" value="C:proteasome accessory complex"/>
    <property type="evidence" value="ECO:0000250"/>
    <property type="project" value="UniProtKB"/>
</dbReference>
<dbReference type="GO" id="GO:0000502">
    <property type="term" value="C:proteasome complex"/>
    <property type="evidence" value="ECO:0000314"/>
    <property type="project" value="UniProtKB"/>
</dbReference>
<dbReference type="GO" id="GO:0008540">
    <property type="term" value="C:proteasome regulatory particle, base subcomplex"/>
    <property type="evidence" value="ECO:0000318"/>
    <property type="project" value="GO_Central"/>
</dbReference>
<dbReference type="GO" id="GO:0042802">
    <property type="term" value="F:identical protein binding"/>
    <property type="evidence" value="ECO:0000353"/>
    <property type="project" value="IntAct"/>
</dbReference>
<dbReference type="GO" id="GO:0060090">
    <property type="term" value="F:molecular adaptor activity"/>
    <property type="evidence" value="ECO:0000269"/>
    <property type="project" value="DisProt"/>
</dbReference>
<dbReference type="GO" id="GO:0031593">
    <property type="term" value="F:polyubiquitin modification-dependent protein binding"/>
    <property type="evidence" value="ECO:0000318"/>
    <property type="project" value="GO_Central"/>
</dbReference>
<dbReference type="GO" id="GO:0003723">
    <property type="term" value="F:RNA binding"/>
    <property type="evidence" value="ECO:0007005"/>
    <property type="project" value="UniProtKB"/>
</dbReference>
<dbReference type="GO" id="GO:0043161">
    <property type="term" value="P:proteasome-mediated ubiquitin-dependent protein catabolic process"/>
    <property type="evidence" value="ECO:0000318"/>
    <property type="project" value="GO_Central"/>
</dbReference>
<dbReference type="CDD" id="cd22297">
    <property type="entry name" value="PSMD4_RAZUL"/>
    <property type="match status" value="1"/>
</dbReference>
<dbReference type="CDD" id="cd01452">
    <property type="entry name" value="VWA_26S_proteasome_subunit"/>
    <property type="match status" value="1"/>
</dbReference>
<dbReference type="DisProt" id="DP01192"/>
<dbReference type="FunFam" id="3.40.50.410:FF:000005">
    <property type="entry name" value="26S proteasome non-ATPase regulatory subunit 4"/>
    <property type="match status" value="1"/>
</dbReference>
<dbReference type="FunFam" id="6.10.300.40:FF:000001">
    <property type="entry name" value="26S proteasome non-ATPase regulatory subunit 4"/>
    <property type="match status" value="1"/>
</dbReference>
<dbReference type="Gene3D" id="6.10.250.380">
    <property type="match status" value="1"/>
</dbReference>
<dbReference type="Gene3D" id="6.10.300.40">
    <property type="match status" value="1"/>
</dbReference>
<dbReference type="Gene3D" id="3.40.50.410">
    <property type="entry name" value="von Willebrand factor, type A domain"/>
    <property type="match status" value="1"/>
</dbReference>
<dbReference type="InterPro" id="IPR027040">
    <property type="entry name" value="PSMD4"/>
</dbReference>
<dbReference type="InterPro" id="IPR049590">
    <property type="entry name" value="PSMD4_RAZUL-like"/>
</dbReference>
<dbReference type="InterPro" id="IPR003903">
    <property type="entry name" value="UIM_dom"/>
</dbReference>
<dbReference type="InterPro" id="IPR002035">
    <property type="entry name" value="VWF_A"/>
</dbReference>
<dbReference type="InterPro" id="IPR036465">
    <property type="entry name" value="vWFA_dom_sf"/>
</dbReference>
<dbReference type="PANTHER" id="PTHR10223">
    <property type="entry name" value="26S PROTEASOME NON-ATPASE REGULATORY SUBUNIT 4"/>
    <property type="match status" value="1"/>
</dbReference>
<dbReference type="PANTHER" id="PTHR10223:SF0">
    <property type="entry name" value="26S PROTEASOME NON-ATPASE REGULATORY SUBUNIT 4"/>
    <property type="match status" value="1"/>
</dbReference>
<dbReference type="Pfam" id="PF02809">
    <property type="entry name" value="UIM"/>
    <property type="match status" value="2"/>
</dbReference>
<dbReference type="Pfam" id="PF13519">
    <property type="entry name" value="VWA_2"/>
    <property type="match status" value="1"/>
</dbReference>
<dbReference type="SMART" id="SM00726">
    <property type="entry name" value="UIM"/>
    <property type="match status" value="2"/>
</dbReference>
<dbReference type="SMART" id="SM00327">
    <property type="entry name" value="VWA"/>
    <property type="match status" value="1"/>
</dbReference>
<dbReference type="SUPFAM" id="SSF53300">
    <property type="entry name" value="vWA-like"/>
    <property type="match status" value="1"/>
</dbReference>
<dbReference type="PROSITE" id="PS50330">
    <property type="entry name" value="UIM"/>
    <property type="match status" value="2"/>
</dbReference>
<dbReference type="PROSITE" id="PS50234">
    <property type="entry name" value="VWFA"/>
    <property type="match status" value="1"/>
</dbReference>
<proteinExistence type="evidence at protein level"/>
<feature type="chain" id="PRO_0000173828" description="26S proteasome non-ATPase regulatory subunit 4">
    <location>
        <begin position="1"/>
        <end position="377"/>
    </location>
</feature>
<feature type="domain" description="VWFA" evidence="3">
    <location>
        <begin position="5"/>
        <end position="188"/>
    </location>
</feature>
<feature type="domain" description="UIM 1" evidence="2">
    <location>
        <begin position="211"/>
        <end position="230"/>
    </location>
</feature>
<feature type="domain" description="UIM 2" evidence="2">
    <location>
        <begin position="282"/>
        <end position="301"/>
    </location>
</feature>
<feature type="region of interest" description="Interaction with UBQLN1" evidence="9">
    <location>
        <begin position="197"/>
        <end position="262"/>
    </location>
</feature>
<feature type="region of interest" description="Essential for ubiquitin-binding">
    <location>
        <begin position="216"/>
        <end position="220"/>
    </location>
</feature>
<feature type="region of interest" description="Disordered" evidence="4">
    <location>
        <begin position="224"/>
        <end position="255"/>
    </location>
</feature>
<feature type="region of interest" description="Essential for ubiquitin-binding">
    <location>
        <begin position="287"/>
        <end position="291"/>
    </location>
</feature>
<feature type="region of interest" description="Disordered" evidence="4">
    <location>
        <begin position="300"/>
        <end position="327"/>
    </location>
</feature>
<feature type="region of interest" description="Disordered" evidence="4">
    <location>
        <begin position="341"/>
        <end position="377"/>
    </location>
</feature>
<feature type="compositionally biased region" description="Basic and acidic residues" evidence="4">
    <location>
        <begin position="224"/>
        <end position="237"/>
    </location>
</feature>
<feature type="compositionally biased region" description="Basic and acidic residues" evidence="4">
    <location>
        <begin position="365"/>
        <end position="377"/>
    </location>
</feature>
<feature type="modified residue" description="Phosphothreonine" evidence="1">
    <location>
        <position position="250"/>
    </location>
</feature>
<feature type="modified residue" description="Phosphothreonine" evidence="1">
    <location>
        <position position="253"/>
    </location>
</feature>
<feature type="modified residue" description="Phosphoserine" evidence="1">
    <location>
        <position position="256"/>
    </location>
</feature>
<feature type="modified residue" description="Phosphoserine" evidence="20 21 22 23 24">
    <location>
        <position position="266"/>
    </location>
</feature>
<feature type="modified residue" description="Phosphoserine" evidence="19 24">
    <location>
        <position position="358"/>
    </location>
</feature>
<feature type="modified residue" description="Phosphoserine" evidence="19 24">
    <location>
        <position position="361"/>
    </location>
</feature>
<feature type="cross-link" description="Glycyl lysine isopeptide (Lys-Gly) (interchain with G-Cter in SUMO2)" evidence="25">
    <location>
        <position position="122"/>
    </location>
</feature>
<feature type="splice variant" id="VSP_005291" description="In isoform Rpn10E." evidence="18">
    <original>DSDDALLKMTISQQ</original>
    <variation>GERGGIRSPGTAGC</variation>
    <location>
        <begin position="255"/>
        <end position="268"/>
    </location>
</feature>
<feature type="splice variant" id="VSP_005292" description="In isoform Rpn10E." evidence="18">
    <location>
        <begin position="269"/>
        <end position="377"/>
    </location>
</feature>
<feature type="strand" evidence="31">
    <location>
        <begin position="4"/>
        <end position="10"/>
    </location>
</feature>
<feature type="helix" evidence="31">
    <location>
        <begin position="14"/>
        <end position="17"/>
    </location>
</feature>
<feature type="strand" evidence="31">
    <location>
        <begin position="20"/>
        <end position="23"/>
    </location>
</feature>
<feature type="helix" evidence="31">
    <location>
        <begin position="25"/>
        <end position="43"/>
    </location>
</feature>
<feature type="strand" evidence="31">
    <location>
        <begin position="48"/>
        <end position="53"/>
    </location>
</feature>
<feature type="strand" evidence="31">
    <location>
        <begin position="55"/>
        <end position="57"/>
    </location>
</feature>
<feature type="strand" evidence="31">
    <location>
        <begin position="61"/>
        <end position="66"/>
    </location>
</feature>
<feature type="helix" evidence="31">
    <location>
        <begin position="68"/>
        <end position="75"/>
    </location>
</feature>
<feature type="helix" evidence="31">
    <location>
        <begin position="86"/>
        <end position="97"/>
    </location>
</feature>
<feature type="strand" evidence="31">
    <location>
        <begin position="101"/>
        <end position="103"/>
    </location>
</feature>
<feature type="strand" evidence="31">
    <location>
        <begin position="105"/>
        <end position="113"/>
    </location>
</feature>
<feature type="helix" evidence="31">
    <location>
        <begin position="121"/>
        <end position="134"/>
    </location>
</feature>
<feature type="strand" evidence="31">
    <location>
        <begin position="137"/>
        <end position="142"/>
    </location>
</feature>
<feature type="strand" evidence="31">
    <location>
        <begin position="144"/>
        <end position="149"/>
    </location>
</feature>
<feature type="helix" evidence="31">
    <location>
        <begin position="151"/>
        <end position="160"/>
    </location>
</feature>
<feature type="strand" evidence="31">
    <location>
        <begin position="175"/>
        <end position="177"/>
    </location>
</feature>
<feature type="helix" evidence="31">
    <location>
        <begin position="181"/>
        <end position="185"/>
    </location>
</feature>
<feature type="turn" evidence="31">
    <location>
        <begin position="186"/>
        <end position="189"/>
    </location>
</feature>
<feature type="turn" evidence="29">
    <location>
        <begin position="197"/>
        <end position="199"/>
    </location>
</feature>
<feature type="strand" evidence="27">
    <location>
        <begin position="201"/>
        <end position="203"/>
    </location>
</feature>
<feature type="strand" evidence="28">
    <location>
        <begin position="205"/>
        <end position="208"/>
    </location>
</feature>
<feature type="helix" evidence="27">
    <location>
        <begin position="210"/>
        <end position="212"/>
    </location>
</feature>
<feature type="helix" evidence="27">
    <location>
        <begin position="214"/>
        <end position="244"/>
    </location>
</feature>
<feature type="strand" evidence="27">
    <location>
        <begin position="245"/>
        <end position="249"/>
    </location>
</feature>
<feature type="strand" evidence="26">
    <location>
        <begin position="268"/>
        <end position="270"/>
    </location>
</feature>
<feature type="strand" evidence="26">
    <location>
        <begin position="273"/>
        <end position="275"/>
    </location>
</feature>
<feature type="helix" evidence="26">
    <location>
        <begin position="278"/>
        <end position="294"/>
    </location>
</feature>
<feature type="strand" evidence="26">
    <location>
        <begin position="296"/>
        <end position="300"/>
    </location>
</feature>
<feature type="strand" evidence="28">
    <location>
        <begin position="302"/>
        <end position="304"/>
    </location>
</feature>
<feature type="turn" evidence="30">
    <location>
        <begin position="309"/>
        <end position="313"/>
    </location>
</feature>
<feature type="helix" evidence="30">
    <location>
        <begin position="322"/>
        <end position="325"/>
    </location>
</feature>
<feature type="helix" evidence="30">
    <location>
        <begin position="328"/>
        <end position="330"/>
    </location>
</feature>
<feature type="helix" evidence="30">
    <location>
        <begin position="332"/>
        <end position="341"/>
    </location>
</feature>
<feature type="helix" evidence="30">
    <location>
        <begin position="350"/>
        <end position="363"/>
    </location>
</feature>
<comment type="function">
    <text evidence="7 12">Component of the 26S proteasome, a multiprotein complex involved in the ATP-dependent degradation of ubiquitinated proteins. This complex plays a key role in the maintenance of protein homeostasis by removing misfolded or damaged proteins, which could impair cellular functions, and by removing proteins whose functions are no longer required. Therefore, the proteasome participates in numerous cellular processes, including cell cycle progression, apoptosis, or DNA damage repair. PSMD4 acts as an ubiquitin receptor subunit through ubiquitin-interacting motifs and selects ubiquitin-conjugates for destruction. Displays a preferred selectivity for longer polyubiquitin chains.</text>
</comment>
<comment type="subunit">
    <text evidence="5 6 8 9 10 11 14 15 16 17">Component of the 19S proteasome regulatory particle complex. The 26S proteasome consists of a 20S core particle (CP) and two 19S regulatory subunits (RP). The regulatory particle is made of a lid composed of 9 subunits, a base containing 6 ATPases and few additional components including PSMD4 (PubMed:27342858, PubMed:27428775). Interacts with NUB1 (PubMed:11585840). Interacts with SQSTM1 (PubMed:15340068). Interacts with UBQLN4 (PubMed:15280365). Interacts with UBE3A (PubMed:22645313). Interacts with UBQLN1 (via ubiquitin-like domain) (PubMed:15147878). Interacts with DDI2 (PubMed:29290612).</text>
</comment>
<comment type="interaction">
    <interactant intactId="EBI-359318">
        <id>P55036</id>
    </interactant>
    <interactant intactId="EBI-954387">
        <id>Q16186</id>
        <label>ADRM1</label>
    </interactant>
    <organismsDiffer>false</organismsDiffer>
    <experiments>6</experiments>
</comment>
<comment type="interaction">
    <interactant intactId="EBI-359318">
        <id>P55036</id>
    </interactant>
    <interactant intactId="EBI-349854">
        <id>P13569</id>
        <label>CFTR</label>
    </interactant>
    <organismsDiffer>false</organismsDiffer>
    <experiments>13</experiments>
</comment>
<comment type="interaction">
    <interactant intactId="EBI-359318">
        <id>P55036</id>
    </interactant>
    <interactant intactId="EBI-466029">
        <id>P42858</id>
        <label>HTT</label>
    </interactant>
    <organismsDiffer>false</organismsDiffer>
    <experiments>5</experiments>
</comment>
<comment type="interaction">
    <interactant intactId="EBI-359318">
        <id>P55036</id>
    </interactant>
    <interactant intactId="EBI-603262">
        <id>P25787</id>
        <label>PSMA2</label>
    </interactant>
    <organismsDiffer>false</organismsDiffer>
    <experiments>2</experiments>
</comment>
<comment type="interaction">
    <interactant intactId="EBI-359318">
        <id>P55036</id>
    </interactant>
    <interactant intactId="EBI-355475">
        <id>P28066</id>
        <label>PSMA5</label>
    </interactant>
    <organismsDiffer>false</organismsDiffer>
    <experiments>3</experiments>
</comment>
<comment type="interaction">
    <interactant intactId="EBI-359318">
        <id>P55036</id>
    </interactant>
    <interactant intactId="EBI-603272">
        <id>O14818</id>
        <label>PSMA7</label>
    </interactant>
    <organismsDiffer>false</organismsDiffer>
    <experiments>2</experiments>
</comment>
<comment type="interaction">
    <interactant intactId="EBI-359318">
        <id>P55036</id>
    </interactant>
    <interactant intactId="EBI-372273">
        <id>P20618</id>
        <label>PSMB1</label>
    </interactant>
    <organismsDiffer>false</organismsDiffer>
    <experiments>3</experiments>
</comment>
<comment type="interaction">
    <interactant intactId="EBI-359318">
        <id>P55036</id>
    </interactant>
    <interactant intactId="EBI-603319">
        <id>Q99436</id>
        <label>PSMB7</label>
    </interactant>
    <organismsDiffer>false</organismsDiffer>
    <experiments>3</experiments>
</comment>
<comment type="interaction">
    <interactant intactId="EBI-359318">
        <id>P55036</id>
    </interactant>
    <interactant intactId="EBI-357598">
        <id>P62191</id>
        <label>PSMC1</label>
    </interactant>
    <organismsDiffer>false</organismsDiffer>
    <experiments>5</experiments>
</comment>
<comment type="interaction">
    <interactant intactId="EBI-359318">
        <id>P55036</id>
    </interactant>
    <interactant intactId="EBI-359710">
        <id>P35998</id>
        <label>PSMC2</label>
    </interactant>
    <organismsDiffer>false</organismsDiffer>
    <experiments>5</experiments>
</comment>
<comment type="interaction">
    <interactant intactId="EBI-359318">
        <id>P55036</id>
    </interactant>
    <interactant intactId="EBI-359720">
        <id>P17980</id>
        <label>PSMC3</label>
    </interactant>
    <organismsDiffer>false</organismsDiffer>
    <experiments>3</experiments>
</comment>
<comment type="interaction">
    <interactant intactId="EBI-359318">
        <id>P55036</id>
    </interactant>
    <interactant intactId="EBI-743997">
        <id>P43686</id>
        <label>PSMC4</label>
    </interactant>
    <organismsDiffer>false</organismsDiffer>
    <experiments>4</experiments>
</comment>
<comment type="interaction">
    <interactant intactId="EBI-359318">
        <id>P55036</id>
    </interactant>
    <interactant intactId="EBI-357745">
        <id>P62195</id>
        <label>PSMC5</label>
    </interactant>
    <organismsDiffer>false</organismsDiffer>
    <experiments>5</experiments>
</comment>
<comment type="interaction">
    <interactant intactId="EBI-359318">
        <id>P55036</id>
    </interactant>
    <interactant intactId="EBI-357669">
        <id>P62333</id>
        <label>PSMC6</label>
    </interactant>
    <organismsDiffer>false</organismsDiffer>
    <experiments>5</experiments>
</comment>
<comment type="interaction">
    <interactant intactId="EBI-359318">
        <id>P55036</id>
    </interactant>
    <interactant intactId="EBI-357874">
        <id>Q99460</id>
        <label>PSMD1</label>
    </interactant>
    <organismsDiffer>false</organismsDiffer>
    <experiments>4</experiments>
</comment>
<comment type="interaction">
    <interactant intactId="EBI-359318">
        <id>P55036</id>
    </interactant>
    <interactant intactId="EBI-357816">
        <id>O00231</id>
        <label>PSMD11</label>
    </interactant>
    <organismsDiffer>false</organismsDiffer>
    <experiments>5</experiments>
</comment>
<comment type="interaction">
    <interactant intactId="EBI-359318">
        <id>P55036</id>
    </interactant>
    <interactant intactId="EBI-359733">
        <id>O00232</id>
        <label>PSMD12</label>
    </interactant>
    <organismsDiffer>false</organismsDiffer>
    <experiments>5</experiments>
</comment>
<comment type="interaction">
    <interactant intactId="EBI-359318">
        <id>P55036</id>
    </interactant>
    <interactant intactId="EBI-356070">
        <id>Q9UNM6</id>
        <label>PSMD13</label>
    </interactant>
    <organismsDiffer>false</organismsDiffer>
    <experiments>4</experiments>
</comment>
<comment type="interaction">
    <interactant intactId="EBI-359318">
        <id>P55036</id>
    </interactant>
    <interactant intactId="EBI-357648">
        <id>Q13200</id>
        <label>PSMD2</label>
    </interactant>
    <organismsDiffer>false</organismsDiffer>
    <experiments>7</experiments>
</comment>
<comment type="interaction">
    <interactant intactId="EBI-359318">
        <id>P55036</id>
    </interactant>
    <interactant intactId="EBI-357622">
        <id>O43242</id>
        <label>PSMD3</label>
    </interactant>
    <organismsDiffer>false</organismsDiffer>
    <experiments>5</experiments>
</comment>
<comment type="interaction">
    <interactant intactId="EBI-359318">
        <id>P55036</id>
    </interactant>
    <interactant intactId="EBI-359318">
        <id>P55036</id>
        <label>PSMD4</label>
    </interactant>
    <organismsDiffer>false</organismsDiffer>
    <experiments>3</experiments>
</comment>
<comment type="interaction">
    <interactant intactId="EBI-359318">
        <id>P55036</id>
    </interactant>
    <interactant intactId="EBI-359701">
        <id>Q15008</id>
        <label>PSMD6</label>
    </interactant>
    <organismsDiffer>false</organismsDiffer>
    <experiments>4</experiments>
</comment>
<comment type="interaction">
    <interactant intactId="EBI-359318">
        <id>P55036</id>
    </interactant>
    <interactant intactId="EBI-359304">
        <id>P48556</id>
        <label>PSMD8</label>
    </interactant>
    <organismsDiffer>false</organismsDiffer>
    <experiments>2</experiments>
</comment>
<comment type="interaction">
    <interactant intactId="EBI-359318">
        <id>P55036</id>
    </interactant>
    <interactant intactId="EBI-746453">
        <id>P54725</id>
        <label>RAD23A</label>
    </interactant>
    <organismsDiffer>false</organismsDiffer>
    <experiments>16</experiments>
</comment>
<comment type="interaction">
    <interactant intactId="EBI-359318">
        <id>P55036</id>
    </interactant>
    <interactant intactId="EBI-954531">
        <id>P54727</id>
        <label>RAD23B</label>
    </interactant>
    <organismsDiffer>false</organismsDiffer>
    <experiments>11</experiments>
</comment>
<comment type="interaction">
    <interactant intactId="EBI-359318">
        <id>P55036</id>
    </interactant>
    <interactant intactId="EBI-1397509">
        <id>P0DPB3</id>
        <label>SCHIP1</label>
    </interactant>
    <organismsDiffer>false</organismsDiffer>
    <experiments>2</experiments>
</comment>
<comment type="interaction">
    <interactant intactId="EBI-359318">
        <id>P55036</id>
    </interactant>
    <interactant intactId="EBI-1752330">
        <id>Q9BYB0</id>
        <label>SHANK3</label>
    </interactant>
    <organismsDiffer>false</organismsDiffer>
    <experiments>2</experiments>
</comment>
<comment type="interaction">
    <interactant intactId="EBI-359318">
        <id>P55036</id>
    </interactant>
    <interactant intactId="EBI-2555179">
        <id>Q9NUJ3</id>
        <label>TCP11L1</label>
    </interactant>
    <organismsDiffer>false</organismsDiffer>
    <experiments>5</experiments>
</comment>
<comment type="interaction">
    <interactant intactId="EBI-359318">
        <id>P55036</id>
    </interactant>
    <interactant intactId="EBI-3390054">
        <id>P0CG48</id>
        <label>UBC</label>
    </interactant>
    <organismsDiffer>false</organismsDiffer>
    <experiments>4</experiments>
</comment>
<comment type="interaction">
    <interactant intactId="EBI-359318">
        <id>P55036</id>
    </interactant>
    <interactant intactId="EBI-954357">
        <id>Q05086</id>
        <label>UBE3A</label>
    </interactant>
    <organismsDiffer>false</organismsDiffer>
    <experiments>5</experiments>
</comment>
<comment type="interaction">
    <interactant intactId="EBI-359318">
        <id>P55036</id>
    </interactant>
    <interactant intactId="EBI-10175863">
        <id>Q05086-2</id>
        <label>UBE3A</label>
    </interactant>
    <organismsDiffer>false</organismsDiffer>
    <experiments>3</experiments>
</comment>
<comment type="interaction">
    <interactant intactId="EBI-359318">
        <id>P55036</id>
    </interactant>
    <interactant intactId="EBI-741480">
        <id>Q9UMX0</id>
        <label>UBQLN1</label>
    </interactant>
    <organismsDiffer>false</organismsDiffer>
    <experiments>4</experiments>
</comment>
<comment type="interaction">
    <interactant intactId="EBI-359318">
        <id>P55036</id>
    </interactant>
    <interactant intactId="EBI-1051183">
        <id>Q9Y5K5</id>
        <label>UCHL5</label>
    </interactant>
    <organismsDiffer>false</organismsDiffer>
    <experiments>8</experiments>
</comment>
<comment type="interaction">
    <interactant intactId="EBI-359318">
        <id>P55036</id>
    </interactant>
    <interactant intactId="EBI-1208116">
        <id>P24610</id>
        <label>Pax3</label>
    </interactant>
    <organismsDiffer>true</organismsDiffer>
    <experiments>3</experiments>
</comment>
<comment type="interaction">
    <interactant intactId="EBI-359318">
        <id>P55036</id>
    </interactant>
    <interactant intactId="EBI-7266339">
        <id>Q62921</id>
        <label>Rbck1</label>
    </interactant>
    <organismsDiffer>true</organismsDiffer>
    <experiments>3</experiments>
</comment>
<comment type="alternative products">
    <event type="alternative splicing"/>
    <isoform>
        <id>P55036-1</id>
        <name>Rpn10A</name>
        <sequence type="displayed"/>
    </isoform>
    <isoform>
        <id>P55036-2</id>
        <name>Rpn10E</name>
        <sequence type="described" ref="VSP_005291 VSP_005292"/>
    </isoform>
    <text>Additional isoforms seem to exist.</text>
</comment>
<comment type="domain">
    <text evidence="12 13">The 2 UIM motifs are involved in the binding to a multi-ubiquitin chain in a cooperative way.</text>
</comment>
<comment type="miscellaneous">
    <molecule>Isoform Rpn10E</molecule>
    <text evidence="18">May be produced at very low levels due to a premature stop codon in the mRNA, leading to nonsense-mediated mRNA decay.</text>
</comment>
<comment type="similarity">
    <text evidence="18">Belongs to the proteasome subunit S5A family.</text>
</comment>
<organism>
    <name type="scientific">Homo sapiens</name>
    <name type="common">Human</name>
    <dbReference type="NCBI Taxonomy" id="9606"/>
    <lineage>
        <taxon>Eukaryota</taxon>
        <taxon>Metazoa</taxon>
        <taxon>Chordata</taxon>
        <taxon>Craniata</taxon>
        <taxon>Vertebrata</taxon>
        <taxon>Euteleostomi</taxon>
        <taxon>Mammalia</taxon>
        <taxon>Eutheria</taxon>
        <taxon>Euarchontoglires</taxon>
        <taxon>Primates</taxon>
        <taxon>Haplorrhini</taxon>
        <taxon>Catarrhini</taxon>
        <taxon>Hominidae</taxon>
        <taxon>Homo</taxon>
    </lineage>
</organism>
<protein>
    <recommendedName>
        <fullName>26S proteasome non-ATPase regulatory subunit 4</fullName>
    </recommendedName>
    <alternativeName>
        <fullName>26S proteasome regulatory subunit RPN10</fullName>
    </alternativeName>
    <alternativeName>
        <fullName>26S proteasome regulatory subunit S5A</fullName>
    </alternativeName>
    <alternativeName>
        <fullName>Antisecretory factor 1</fullName>
        <shortName>AF</shortName>
        <shortName>ASF</shortName>
    </alternativeName>
    <alternativeName>
        <fullName>Multiubiquitin chain-binding protein</fullName>
    </alternativeName>
</protein>
<accession>P55036</accession>
<accession>D3DV16</accession>
<accession>Q5VWC5</accession>
<accession>Q9NS92</accession>
<reference key="1">
    <citation type="journal article" date="1995" name="J. Biol. Chem.">
        <title>Molecular cloning and expression of a pituitary gland protein modulating intestinal fluid secretion.</title>
        <authorList>
            <person name="Johansson E."/>
            <person name="Loennroth I."/>
            <person name="Lange S."/>
            <person name="Jonson I."/>
            <person name="Jennische E."/>
            <person name="Loennroth C."/>
        </authorList>
    </citation>
    <scope>NUCLEOTIDE SEQUENCE [MRNA]</scope>
    <scope>PROTEIN SEQUENCE OF 63-75 AND 130-140</scope>
    <source>
        <tissue>Pituitary</tissue>
    </source>
</reference>
<reference key="2">
    <citation type="submission" date="1997-05" db="EMBL/GenBank/DDBJ databases">
        <authorList>
            <person name="Loennroth I."/>
        </authorList>
    </citation>
    <scope>SEQUENCE REVISION</scope>
</reference>
<reference key="3">
    <citation type="journal article" date="1996" name="FEBS Lett.">
        <title>Molecular cloning and expression of a multiubiquitin chain binding subunit of the human 26S protease.</title>
        <authorList>
            <person name="Ferrell K."/>
            <person name="Deveraux Q."/>
            <person name="van Nocker S."/>
            <person name="Rechsteiner M."/>
        </authorList>
    </citation>
    <scope>NUCLEOTIDE SEQUENCE [MRNA]</scope>
    <scope>PARTIAL PROTEIN SEQUENCE</scope>
</reference>
<reference key="4">
    <citation type="journal article" date="2000" name="EMBO J.">
        <title>Developmentally regulated, alternative splicing of the Rpn10 gene generates multiple forms of 26S proteasomes.</title>
        <authorList>
            <person name="Kawahara H."/>
            <person name="Kasahara M."/>
            <person name="Nishiyama A."/>
            <person name="Ohsumi K."/>
            <person name="Goto T."/>
            <person name="Kishimoto T."/>
            <person name="Saeki Y."/>
            <person name="Yokosawa H."/>
            <person name="Shimbara N."/>
            <person name="Murata S."/>
            <person name="Chiba T."/>
            <person name="Suzuki K."/>
            <person name="Tanaka K."/>
        </authorList>
    </citation>
    <scope>NUCLEOTIDE SEQUENCE [MRNA]</scope>
    <scope>ALTERNATIVE SPLICING</scope>
    <source>
        <tissue>Fetal brain</tissue>
    </source>
</reference>
<reference key="5">
    <citation type="journal article" date="2006" name="Nature">
        <title>The DNA sequence and biological annotation of human chromosome 1.</title>
        <authorList>
            <person name="Gregory S.G."/>
            <person name="Barlow K.F."/>
            <person name="McLay K.E."/>
            <person name="Kaul R."/>
            <person name="Swarbreck D."/>
            <person name="Dunham A."/>
            <person name="Scott C.E."/>
            <person name="Howe K.L."/>
            <person name="Woodfine K."/>
            <person name="Spencer C.C.A."/>
            <person name="Jones M.C."/>
            <person name="Gillson C."/>
            <person name="Searle S."/>
            <person name="Zhou Y."/>
            <person name="Kokocinski F."/>
            <person name="McDonald L."/>
            <person name="Evans R."/>
            <person name="Phillips K."/>
            <person name="Atkinson A."/>
            <person name="Cooper R."/>
            <person name="Jones C."/>
            <person name="Hall R.E."/>
            <person name="Andrews T.D."/>
            <person name="Lloyd C."/>
            <person name="Ainscough R."/>
            <person name="Almeida J.P."/>
            <person name="Ambrose K.D."/>
            <person name="Anderson F."/>
            <person name="Andrew R.W."/>
            <person name="Ashwell R.I.S."/>
            <person name="Aubin K."/>
            <person name="Babbage A.K."/>
            <person name="Bagguley C.L."/>
            <person name="Bailey J."/>
            <person name="Beasley H."/>
            <person name="Bethel G."/>
            <person name="Bird C.P."/>
            <person name="Bray-Allen S."/>
            <person name="Brown J.Y."/>
            <person name="Brown A.J."/>
            <person name="Buckley D."/>
            <person name="Burton J."/>
            <person name="Bye J."/>
            <person name="Carder C."/>
            <person name="Chapman J.C."/>
            <person name="Clark S.Y."/>
            <person name="Clarke G."/>
            <person name="Clee C."/>
            <person name="Cobley V."/>
            <person name="Collier R.E."/>
            <person name="Corby N."/>
            <person name="Coville G.J."/>
            <person name="Davies J."/>
            <person name="Deadman R."/>
            <person name="Dunn M."/>
            <person name="Earthrowl M."/>
            <person name="Ellington A.G."/>
            <person name="Errington H."/>
            <person name="Frankish A."/>
            <person name="Frankland J."/>
            <person name="French L."/>
            <person name="Garner P."/>
            <person name="Garnett J."/>
            <person name="Gay L."/>
            <person name="Ghori M.R.J."/>
            <person name="Gibson R."/>
            <person name="Gilby L.M."/>
            <person name="Gillett W."/>
            <person name="Glithero R.J."/>
            <person name="Grafham D.V."/>
            <person name="Griffiths C."/>
            <person name="Griffiths-Jones S."/>
            <person name="Grocock R."/>
            <person name="Hammond S."/>
            <person name="Harrison E.S.I."/>
            <person name="Hart E."/>
            <person name="Haugen E."/>
            <person name="Heath P.D."/>
            <person name="Holmes S."/>
            <person name="Holt K."/>
            <person name="Howden P.J."/>
            <person name="Hunt A.R."/>
            <person name="Hunt S.E."/>
            <person name="Hunter G."/>
            <person name="Isherwood J."/>
            <person name="James R."/>
            <person name="Johnson C."/>
            <person name="Johnson D."/>
            <person name="Joy A."/>
            <person name="Kay M."/>
            <person name="Kershaw J.K."/>
            <person name="Kibukawa M."/>
            <person name="Kimberley A.M."/>
            <person name="King A."/>
            <person name="Knights A.J."/>
            <person name="Lad H."/>
            <person name="Laird G."/>
            <person name="Lawlor S."/>
            <person name="Leongamornlert D.A."/>
            <person name="Lloyd D.M."/>
            <person name="Loveland J."/>
            <person name="Lovell J."/>
            <person name="Lush M.J."/>
            <person name="Lyne R."/>
            <person name="Martin S."/>
            <person name="Mashreghi-Mohammadi M."/>
            <person name="Matthews L."/>
            <person name="Matthews N.S.W."/>
            <person name="McLaren S."/>
            <person name="Milne S."/>
            <person name="Mistry S."/>
            <person name="Moore M.J.F."/>
            <person name="Nickerson T."/>
            <person name="O'Dell C.N."/>
            <person name="Oliver K."/>
            <person name="Palmeiri A."/>
            <person name="Palmer S.A."/>
            <person name="Parker A."/>
            <person name="Patel D."/>
            <person name="Pearce A.V."/>
            <person name="Peck A.I."/>
            <person name="Pelan S."/>
            <person name="Phelps K."/>
            <person name="Phillimore B.J."/>
            <person name="Plumb R."/>
            <person name="Rajan J."/>
            <person name="Raymond C."/>
            <person name="Rouse G."/>
            <person name="Saenphimmachak C."/>
            <person name="Sehra H.K."/>
            <person name="Sheridan E."/>
            <person name="Shownkeen R."/>
            <person name="Sims S."/>
            <person name="Skuce C.D."/>
            <person name="Smith M."/>
            <person name="Steward C."/>
            <person name="Subramanian S."/>
            <person name="Sycamore N."/>
            <person name="Tracey A."/>
            <person name="Tromans A."/>
            <person name="Van Helmond Z."/>
            <person name="Wall M."/>
            <person name="Wallis J.M."/>
            <person name="White S."/>
            <person name="Whitehead S.L."/>
            <person name="Wilkinson J.E."/>
            <person name="Willey D.L."/>
            <person name="Williams H."/>
            <person name="Wilming L."/>
            <person name="Wray P.W."/>
            <person name="Wu Z."/>
            <person name="Coulson A."/>
            <person name="Vaudin M."/>
            <person name="Sulston J.E."/>
            <person name="Durbin R.M."/>
            <person name="Hubbard T."/>
            <person name="Wooster R."/>
            <person name="Dunham I."/>
            <person name="Carter N.P."/>
            <person name="McVean G."/>
            <person name="Ross M.T."/>
            <person name="Harrow J."/>
            <person name="Olson M.V."/>
            <person name="Beck S."/>
            <person name="Rogers J."/>
            <person name="Bentley D.R."/>
        </authorList>
    </citation>
    <scope>NUCLEOTIDE SEQUENCE [LARGE SCALE GENOMIC DNA]</scope>
</reference>
<reference key="6">
    <citation type="submission" date="2005-09" db="EMBL/GenBank/DDBJ databases">
        <authorList>
            <person name="Mural R.J."/>
            <person name="Istrail S."/>
            <person name="Sutton G.G."/>
            <person name="Florea L."/>
            <person name="Halpern A.L."/>
            <person name="Mobarry C.M."/>
            <person name="Lippert R."/>
            <person name="Walenz B."/>
            <person name="Shatkay H."/>
            <person name="Dew I."/>
            <person name="Miller J.R."/>
            <person name="Flanigan M.J."/>
            <person name="Edwards N.J."/>
            <person name="Bolanos R."/>
            <person name="Fasulo D."/>
            <person name="Halldorsson B.V."/>
            <person name="Hannenhalli S."/>
            <person name="Turner R."/>
            <person name="Yooseph S."/>
            <person name="Lu F."/>
            <person name="Nusskern D.R."/>
            <person name="Shue B.C."/>
            <person name="Zheng X.H."/>
            <person name="Zhong F."/>
            <person name="Delcher A.L."/>
            <person name="Huson D.H."/>
            <person name="Kravitz S.A."/>
            <person name="Mouchard L."/>
            <person name="Reinert K."/>
            <person name="Remington K.A."/>
            <person name="Clark A.G."/>
            <person name="Waterman M.S."/>
            <person name="Eichler E.E."/>
            <person name="Adams M.D."/>
            <person name="Hunkapiller M.W."/>
            <person name="Myers E.W."/>
            <person name="Venter J.C."/>
        </authorList>
    </citation>
    <scope>NUCLEOTIDE SEQUENCE [LARGE SCALE GENOMIC DNA]</scope>
</reference>
<reference key="7">
    <citation type="journal article" date="2004" name="Genome Res.">
        <title>The status, quality, and expansion of the NIH full-length cDNA project: the Mammalian Gene Collection (MGC).</title>
        <authorList>
            <consortium name="The MGC Project Team"/>
        </authorList>
    </citation>
    <scope>NUCLEOTIDE SEQUENCE [LARGE SCALE MRNA]</scope>
    <source>
        <tissue>Liver</tissue>
        <tissue>Lung</tissue>
    </source>
</reference>
<reference key="8">
    <citation type="submission" date="1996-09" db="EMBL/GenBank/DDBJ databases">
        <title>Proteolysis of presenilin 1 is associated with the 26S proteasome and is altered in Alzheimer's disease.</title>
        <authorList>
            <person name="Fraser P.E."/>
            <person name="Levesque G."/>
            <person name="Rogaeva E.A."/>
            <person name="Yu G."/>
            <person name="St George-Hyslop P.H."/>
        </authorList>
    </citation>
    <scope>NUCLEOTIDE SEQUENCE [MRNA] OF 70-377</scope>
    <source>
        <tissue>Brain</tissue>
    </source>
</reference>
<reference key="9">
    <citation type="journal article" date="1986" name="Biochim. Biophys. Acta">
        <title>Purification and characterization of the antisecretory factor: a protein in the central nervous system and in the gut which inhibits intestinal hypersecretion induced by cholera toxin.</title>
        <authorList>
            <person name="Loennroth I."/>
            <person name="Lange S."/>
        </authorList>
    </citation>
    <scope>CHARACTERIZATION</scope>
</reference>
<reference key="10">
    <citation type="journal article" date="1992" name="Eur. J. Biochem.">
        <title>Demonstration that a human 26S proteolytic complex consists of a proteasome and multiple associated protein components and hydrolyzes ATP and ubiquitin-ligated proteins by closely linked mechanisms.</title>
        <authorList>
            <person name="Kanayama H.O."/>
            <person name="Tamura T."/>
            <person name="Ugai S."/>
            <person name="Kagawa S."/>
            <person name="Tanahashi N."/>
            <person name="Yoshimura T."/>
            <person name="Tanaka K."/>
            <person name="Ichihara A."/>
        </authorList>
    </citation>
    <scope>FUNCTION</scope>
</reference>
<reference key="11">
    <citation type="journal article" date="1998" name="J. Biol. Chem.">
        <title>Characterization of two polyubiquitin binding sites in the 26 S protease subunit 5a.</title>
        <authorList>
            <person name="Young P."/>
            <person name="Deveraux Q."/>
            <person name="Beal R.E."/>
            <person name="Pickart C.M."/>
            <person name="Rechsteiner M."/>
        </authorList>
    </citation>
    <scope>POLYUBIQUITIN BINDING SITES</scope>
</reference>
<reference key="12">
    <citation type="journal article" date="2001" name="J. Biol. Chem.">
        <title>Targeting of NEDD8 and its conjugates for proteasomal degradation by NUB1.</title>
        <authorList>
            <person name="Kamitani T."/>
            <person name="Kito K."/>
            <person name="Fukuda-Kamitani T."/>
            <person name="Yeh E.T.H."/>
        </authorList>
    </citation>
    <scope>INTERACTION WITH NUB1</scope>
</reference>
<reference key="13">
    <citation type="journal article" date="2004" name="FEBS Lett.">
        <title>Ubiquilin interacts with ubiquitylated proteins and proteasome through its ubiquitin-associated and ubiquitin-like domains.</title>
        <authorList>
            <person name="Ko H.S."/>
            <person name="Uehara T."/>
            <person name="Tsuruma K."/>
            <person name="Nomura Y."/>
        </authorList>
    </citation>
    <scope>INTERACTION WITH UBQLN1</scope>
</reference>
<reference key="14">
    <citation type="journal article" date="2004" name="Genome Biol.">
        <title>An unappreciated role for RNA surveillance.</title>
        <authorList>
            <person name="Hillman R.T."/>
            <person name="Green R.E."/>
            <person name="Brenner S.E."/>
        </authorList>
    </citation>
    <scope>SPLICE ISOFORM(S) THAT ARE POTENTIAL NMD TARGET(S)</scope>
</reference>
<reference key="15">
    <citation type="journal article" date="2004" name="J. Biol. Chem.">
        <title>The effects of the polyglutamine repeat protein ataxin-1 on the UbL-UBA protein A1Up.</title>
        <authorList>
            <person name="Riley B.E."/>
            <person name="Xu Y."/>
            <person name="Zoghbi H.Y."/>
            <person name="Orr H.T."/>
        </authorList>
    </citation>
    <scope>INTERACTION WITH UBQLN4</scope>
</reference>
<reference key="16">
    <citation type="journal article" date="2004" name="Mol. Cell. Biol.">
        <title>Sequestosome 1/p62 is a polyubiquitin chain binding protein involved in ubiquitin proteasome degradation.</title>
        <authorList>
            <person name="Seibenhener M.L."/>
            <person name="Babu J.R."/>
            <person name="Geetha T."/>
            <person name="Wong H.C."/>
            <person name="Krishna N.R."/>
            <person name="Wooten M.W."/>
        </authorList>
    </citation>
    <scope>INTERACTION WITH SQSTM1</scope>
</reference>
<reference key="17">
    <citation type="journal article" date="2007" name="Biochemistry">
        <title>Mass spectrometric characterization of the affinity-purified human 26S proteasome complex.</title>
        <authorList>
            <person name="Wang X."/>
            <person name="Chen C.-F."/>
            <person name="Baker P.R."/>
            <person name="Chen P.-L."/>
            <person name="Kaiser P."/>
            <person name="Huang L."/>
        </authorList>
    </citation>
    <scope>PHOSPHORYLATION [LARGE SCALE ANALYSIS] AT SER-358 AND SER-361</scope>
    <scope>IDENTIFICATION BY MASS SPECTROMETRY [LARGE SCALE ANALYSIS]</scope>
    <source>
        <tissue>Embryonic kidney</tissue>
    </source>
</reference>
<reference key="18">
    <citation type="journal article" date="2007" name="Science">
        <title>ATM and ATR substrate analysis reveals extensive protein networks responsive to DNA damage.</title>
        <authorList>
            <person name="Matsuoka S."/>
            <person name="Ballif B.A."/>
            <person name="Smogorzewska A."/>
            <person name="McDonald E.R. III"/>
            <person name="Hurov K.E."/>
            <person name="Luo J."/>
            <person name="Bakalarski C.E."/>
            <person name="Zhao Z."/>
            <person name="Solimini N."/>
            <person name="Lerenthal Y."/>
            <person name="Shiloh Y."/>
            <person name="Gygi S.P."/>
            <person name="Elledge S.J."/>
        </authorList>
    </citation>
    <scope>PHOSPHORYLATION [LARGE SCALE ANALYSIS] AT SER-266</scope>
    <scope>IDENTIFICATION BY MASS SPECTROMETRY [LARGE SCALE ANALYSIS]</scope>
    <source>
        <tissue>Embryonic kidney</tissue>
    </source>
</reference>
<reference key="19">
    <citation type="journal article" date="2008" name="Proc. Natl. Acad. Sci. U.S.A.">
        <title>A quantitative atlas of mitotic phosphorylation.</title>
        <authorList>
            <person name="Dephoure N."/>
            <person name="Zhou C."/>
            <person name="Villen J."/>
            <person name="Beausoleil S.A."/>
            <person name="Bakalarski C.E."/>
            <person name="Elledge S.J."/>
            <person name="Gygi S.P."/>
        </authorList>
    </citation>
    <scope>PHOSPHORYLATION [LARGE SCALE ANALYSIS] AT SER-266</scope>
    <scope>IDENTIFICATION BY MASS SPECTROMETRY [LARGE SCALE ANALYSIS]</scope>
    <source>
        <tissue>Cervix carcinoma</tissue>
    </source>
</reference>
<reference key="20">
    <citation type="journal article" date="2010" name="Sci. Signal.">
        <title>Quantitative phosphoproteomics reveals widespread full phosphorylation site occupancy during mitosis.</title>
        <authorList>
            <person name="Olsen J.V."/>
            <person name="Vermeulen M."/>
            <person name="Santamaria A."/>
            <person name="Kumar C."/>
            <person name="Miller M.L."/>
            <person name="Jensen L.J."/>
            <person name="Gnad F."/>
            <person name="Cox J."/>
            <person name="Jensen T.S."/>
            <person name="Nigg E.A."/>
            <person name="Brunak S."/>
            <person name="Mann M."/>
        </authorList>
    </citation>
    <scope>PHOSPHORYLATION [LARGE SCALE ANALYSIS] AT SER-266</scope>
    <scope>IDENTIFICATION BY MASS SPECTROMETRY [LARGE SCALE ANALYSIS]</scope>
    <source>
        <tissue>Cervix carcinoma</tissue>
    </source>
</reference>
<reference key="21">
    <citation type="journal article" date="2011" name="BMC Syst. Biol.">
        <title>Initial characterization of the human central proteome.</title>
        <authorList>
            <person name="Burkard T.R."/>
            <person name="Planyavsky M."/>
            <person name="Kaupe I."/>
            <person name="Breitwieser F.P."/>
            <person name="Buerckstuemmer T."/>
            <person name="Bennett K.L."/>
            <person name="Superti-Furga G."/>
            <person name="Colinge J."/>
        </authorList>
    </citation>
    <scope>IDENTIFICATION BY MASS SPECTROMETRY [LARGE SCALE ANALYSIS]</scope>
</reference>
<reference key="22">
    <citation type="journal article" date="2011" name="Sci. Signal.">
        <title>System-wide temporal characterization of the proteome and phosphoproteome of human embryonic stem cell differentiation.</title>
        <authorList>
            <person name="Rigbolt K.T."/>
            <person name="Prokhorova T.A."/>
            <person name="Akimov V."/>
            <person name="Henningsen J."/>
            <person name="Johansen P.T."/>
            <person name="Kratchmarova I."/>
            <person name="Kassem M."/>
            <person name="Mann M."/>
            <person name="Olsen J.V."/>
            <person name="Blagoev B."/>
        </authorList>
    </citation>
    <scope>PHOSPHORYLATION [LARGE SCALE ANALYSIS] AT SER-266</scope>
    <scope>IDENTIFICATION BY MASS SPECTROMETRY [LARGE SCALE ANALYSIS]</scope>
</reference>
<reference key="23">
    <citation type="journal article" date="2012" name="Mol. Cell. Biol.">
        <title>Identification and proteomic analysis of distinct UBE3A/E6AP protein complexes.</title>
        <authorList>
            <person name="Martinez-Noel G."/>
            <person name="Galligan J.T."/>
            <person name="Sowa M.E."/>
            <person name="Arndt V."/>
            <person name="Overton T.M."/>
            <person name="Harper J.W."/>
            <person name="Howley P.M."/>
        </authorList>
    </citation>
    <scope>INTERACTION WITH UBE3A</scope>
</reference>
<reference key="24">
    <citation type="journal article" date="2012" name="Proc. Natl. Acad. Sci. U.S.A.">
        <title>N-terminal acetylome analyses and functional insights of the N-terminal acetyltransferase NatB.</title>
        <authorList>
            <person name="Van Damme P."/>
            <person name="Lasa M."/>
            <person name="Polevoda B."/>
            <person name="Gazquez C."/>
            <person name="Elosegui-Artola A."/>
            <person name="Kim D.S."/>
            <person name="De Juan-Pardo E."/>
            <person name="Demeyer K."/>
            <person name="Hole K."/>
            <person name="Larrea E."/>
            <person name="Timmerman E."/>
            <person name="Prieto J."/>
            <person name="Arnesen T."/>
            <person name="Sherman F."/>
            <person name="Gevaert K."/>
            <person name="Aldabe R."/>
        </authorList>
    </citation>
    <scope>IDENTIFICATION BY MASS SPECTROMETRY [LARGE SCALE ANALYSIS]</scope>
</reference>
<reference key="25">
    <citation type="journal article" date="2013" name="J. Proteome Res.">
        <title>Toward a comprehensive characterization of a human cancer cell phosphoproteome.</title>
        <authorList>
            <person name="Zhou H."/>
            <person name="Di Palma S."/>
            <person name="Preisinger C."/>
            <person name="Peng M."/>
            <person name="Polat A.N."/>
            <person name="Heck A.J."/>
            <person name="Mohammed S."/>
        </authorList>
    </citation>
    <scope>PHOSPHORYLATION [LARGE SCALE ANALYSIS] AT SER-266; SER-358 AND SER-361</scope>
    <scope>IDENTIFICATION BY MASS SPECTROMETRY [LARGE SCALE ANALYSIS]</scope>
    <source>
        <tissue>Cervix carcinoma</tissue>
        <tissue>Erythroleukemia</tissue>
    </source>
</reference>
<reference key="26">
    <citation type="journal article" date="2014" name="J. Proteomics">
        <title>An enzyme assisted RP-RPLC approach for in-depth analysis of human liver phosphoproteome.</title>
        <authorList>
            <person name="Bian Y."/>
            <person name="Song C."/>
            <person name="Cheng K."/>
            <person name="Dong M."/>
            <person name="Wang F."/>
            <person name="Huang J."/>
            <person name="Sun D."/>
            <person name="Wang L."/>
            <person name="Ye M."/>
            <person name="Zou H."/>
        </authorList>
    </citation>
    <scope>IDENTIFICATION BY MASS SPECTROMETRY [LARGE SCALE ANALYSIS]</scope>
    <source>
        <tissue>Liver</tissue>
    </source>
</reference>
<reference key="27">
    <citation type="journal article" date="2017" name="Nat. Struct. Mol. Biol.">
        <title>Site-specific mapping of the human SUMO proteome reveals co-modification with phosphorylation.</title>
        <authorList>
            <person name="Hendriks I.A."/>
            <person name="Lyon D."/>
            <person name="Young C."/>
            <person name="Jensen L.J."/>
            <person name="Vertegaal A.C."/>
            <person name="Nielsen M.L."/>
        </authorList>
    </citation>
    <scope>SUMOYLATION [LARGE SCALE ANALYSIS] AT LYS-122</scope>
    <scope>IDENTIFICATION BY MASS SPECTROMETRY [LARGE SCALE ANALYSIS]</scope>
</reference>
<reference key="28">
    <citation type="journal article" date="2018" name="Mol. Cell">
        <title>Removal of RTF2 from Stalled Replisomes Promotes Maintenance of Genome Integrity.</title>
        <authorList>
            <person name="Kottemann M.C."/>
            <person name="Conti B.A."/>
            <person name="Lach F.P."/>
            <person name="Smogorzewska A."/>
        </authorList>
    </citation>
    <scope>INTERACTION WITH DDI2</scope>
</reference>
<reference key="29">
    <citation type="journal article" date="2003" name="EMBO J.">
        <title>Structural determinants for the binding of ubiquitin-like domains to the proteasome.</title>
        <authorList>
            <person name="Mueller T.D."/>
            <person name="Feigon J."/>
        </authorList>
    </citation>
    <scope>STRUCTURE BY NMR OF 263-306 IN COMPLEX WITH HR23A UBIQUITIN-LIKE DOMAIN</scope>
</reference>
<reference key="30">
    <citation type="journal article" date="2004" name="J. Biol. Chem.">
        <title>Structure of the ubiquitin-interacting motif of S5a bound to the ubiquitin-like domain of HR23B.</title>
        <authorList>
            <person name="Fujiwara K."/>
            <person name="Tenno T."/>
            <person name="Sugasawa K."/>
            <person name="Jee J.-G."/>
            <person name="Ohki I."/>
            <person name="Kojima C."/>
            <person name="Tochio H."/>
            <person name="Hiroaki H."/>
            <person name="Hanaoka F."/>
            <person name="Shirakawa M."/>
        </authorList>
    </citation>
    <scope>STRUCTURE BY NMR OF 260-307 IN COMPLEX WITH HR23B UBIQUITIN-LIKE DOMAIN</scope>
</reference>
<reference key="31">
    <citation type="journal article" date="2005" name="J. Mol. Biol.">
        <title>Structure of S5a bound to monoubiquitin provides a model for polyubiquitin recognition.</title>
        <authorList>
            <person name="Wang Q."/>
            <person name="Young P."/>
            <person name="Walters K.J."/>
        </authorList>
    </citation>
    <scope>STRUCTURE BY NMR OF 192-306</scope>
    <scope>FUNCTION</scope>
    <scope>DOMAIN</scope>
</reference>
<reference key="32">
    <citation type="journal article" date="2009" name="Mol. Cell">
        <title>Structure of the s5a:k48-linked diubiquitin complex and its interactions with rpn13.</title>
        <authorList>
            <person name="Zhang N."/>
            <person name="Wang Q."/>
            <person name="Ehlinger A."/>
            <person name="Randles L."/>
            <person name="Lary J.W."/>
            <person name="Kang Y."/>
            <person name="Haririnia A."/>
            <person name="Storaska A.J."/>
            <person name="Cole J.L."/>
            <person name="Fushman D."/>
            <person name="Walters K.J."/>
        </authorList>
    </citation>
    <scope>STRUCTURE BY NMR OF 196-306</scope>
    <scope>DOMAIN</scope>
</reference>
<reference key="33">
    <citation type="journal article" date="2016" name="Nat. Struct. Mol. Biol.">
        <title>An atomic structure of the human 26S proteasome.</title>
        <authorList>
            <person name="Huang X."/>
            <person name="Luan B."/>
            <person name="Wu J."/>
            <person name="Shi Y."/>
        </authorList>
    </citation>
    <scope>STRUCTURE BY ELECTRON MICROSCOPY (3.50 ANGSTROMS)</scope>
    <scope>SUBUNIT</scope>
</reference>
<reference key="34">
    <citation type="journal article" date="2016" name="Proc. Natl. Acad. Sci. U.S.A.">
        <title>Structure of the human 26S proteasome at a resolution of 3.9 Aa.</title>
        <authorList>
            <person name="Schweitzer A."/>
            <person name="Aufderheide A."/>
            <person name="Rudack T."/>
            <person name="Beck F."/>
            <person name="Pfeifer G."/>
            <person name="Plitzko J.M."/>
            <person name="Sakata E."/>
            <person name="Schulten K."/>
            <person name="Foerster F."/>
            <person name="Baumeister W."/>
        </authorList>
    </citation>
    <scope>STRUCTURE BY ELECTRON MICROSCOPY (4.50 ANGSTROMS)</scope>
    <scope>SUBUNIT</scope>
</reference>